<evidence type="ECO:0000255" key="1">
    <source>
        <dbReference type="HAMAP-Rule" id="MF_00176"/>
    </source>
</evidence>
<protein>
    <recommendedName>
        <fullName evidence="1">Serine--tRNA ligase</fullName>
        <ecNumber evidence="1">6.1.1.11</ecNumber>
    </recommendedName>
    <alternativeName>
        <fullName evidence="1">Seryl-tRNA synthetase</fullName>
        <shortName evidence="1">SerRS</shortName>
    </alternativeName>
    <alternativeName>
        <fullName evidence="1">Seryl-tRNA(Ser/Sec) synthetase</fullName>
    </alternativeName>
</protein>
<feature type="chain" id="PRO_1000098087" description="Serine--tRNA ligase">
    <location>
        <begin position="1"/>
        <end position="418"/>
    </location>
</feature>
<feature type="binding site" evidence="1">
    <location>
        <begin position="232"/>
        <end position="234"/>
    </location>
    <ligand>
        <name>L-serine</name>
        <dbReference type="ChEBI" id="CHEBI:33384"/>
    </ligand>
</feature>
<feature type="binding site" evidence="1">
    <location>
        <begin position="263"/>
        <end position="265"/>
    </location>
    <ligand>
        <name>ATP</name>
        <dbReference type="ChEBI" id="CHEBI:30616"/>
    </ligand>
</feature>
<feature type="binding site" evidence="1">
    <location>
        <position position="279"/>
    </location>
    <ligand>
        <name>ATP</name>
        <dbReference type="ChEBI" id="CHEBI:30616"/>
    </ligand>
</feature>
<feature type="binding site" evidence="1">
    <location>
        <position position="286"/>
    </location>
    <ligand>
        <name>L-serine</name>
        <dbReference type="ChEBI" id="CHEBI:33384"/>
    </ligand>
</feature>
<feature type="binding site" evidence="1">
    <location>
        <begin position="350"/>
        <end position="353"/>
    </location>
    <ligand>
        <name>ATP</name>
        <dbReference type="ChEBI" id="CHEBI:30616"/>
    </ligand>
</feature>
<feature type="binding site" evidence="1">
    <location>
        <position position="385"/>
    </location>
    <ligand>
        <name>L-serine</name>
        <dbReference type="ChEBI" id="CHEBI:33384"/>
    </ligand>
</feature>
<name>SYS_LEPBP</name>
<accession>B0SRZ1</accession>
<sequence>MLDINRIVQNPEELLSTLQKRGVVSSDIEAKIKSVSEKQRILKLEVEELRAERNRVSKEIGIQKSQGKDITEISNSMKGVGDRIKSIEEELTKEEESLHELNLGLPNLLDPSVPEGKSEEDNVLIRQWGEIPKLSFEAKTHFDIGEKLGIFDFERGVKLSGARFYTYRGLGAKLERSLMNLMLDTHTSENGYEEMWVPVLVNDESMTATGQLPKFAEDFYRLEKDGLNLIPTAEVPLTNYYRDEIIQEKELPISVCAHTSCFRREAGSYGRDTRGLVRVHQFQKVELVKFVEPEKSGEAHEKMLQDAESILQKLKLPYRVMLLCSKDMSSASSKTYDIEVWMPGLGRFMEISSVSNFKDYQARRGKIRYKSKEGKNLLVHTLNGSGLAIGRTLAAVIENYQSEDGTFQIPDVLKPYIR</sequence>
<dbReference type="EC" id="6.1.1.11" evidence="1"/>
<dbReference type="EMBL" id="CP000786">
    <property type="protein sequence ID" value="ABZ99526.1"/>
    <property type="molecule type" value="Genomic_DNA"/>
</dbReference>
<dbReference type="RefSeq" id="WP_012390382.1">
    <property type="nucleotide sequence ID" value="NC_010602.1"/>
</dbReference>
<dbReference type="SMR" id="B0SRZ1"/>
<dbReference type="STRING" id="456481.LEPBI_I3467"/>
<dbReference type="KEGG" id="lbi:LEPBI_I3467"/>
<dbReference type="HOGENOM" id="CLU_023797_1_1_12"/>
<dbReference type="OrthoDB" id="9804647at2"/>
<dbReference type="BioCyc" id="LBIF456481:LEPBI_RS17010-MONOMER"/>
<dbReference type="UniPathway" id="UPA00906">
    <property type="reaction ID" value="UER00895"/>
</dbReference>
<dbReference type="Proteomes" id="UP000001847">
    <property type="component" value="Chromosome I"/>
</dbReference>
<dbReference type="GO" id="GO:0005737">
    <property type="term" value="C:cytoplasm"/>
    <property type="evidence" value="ECO:0007669"/>
    <property type="project" value="UniProtKB-SubCell"/>
</dbReference>
<dbReference type="GO" id="GO:0005524">
    <property type="term" value="F:ATP binding"/>
    <property type="evidence" value="ECO:0007669"/>
    <property type="project" value="UniProtKB-UniRule"/>
</dbReference>
<dbReference type="GO" id="GO:0004828">
    <property type="term" value="F:serine-tRNA ligase activity"/>
    <property type="evidence" value="ECO:0007669"/>
    <property type="project" value="UniProtKB-UniRule"/>
</dbReference>
<dbReference type="GO" id="GO:0016260">
    <property type="term" value="P:selenocysteine biosynthetic process"/>
    <property type="evidence" value="ECO:0007669"/>
    <property type="project" value="UniProtKB-UniRule"/>
</dbReference>
<dbReference type="GO" id="GO:0006434">
    <property type="term" value="P:seryl-tRNA aminoacylation"/>
    <property type="evidence" value="ECO:0007669"/>
    <property type="project" value="UniProtKB-UniRule"/>
</dbReference>
<dbReference type="CDD" id="cd00770">
    <property type="entry name" value="SerRS_core"/>
    <property type="match status" value="1"/>
</dbReference>
<dbReference type="Gene3D" id="3.30.930.10">
    <property type="entry name" value="Bira Bifunctional Protein, Domain 2"/>
    <property type="match status" value="1"/>
</dbReference>
<dbReference type="Gene3D" id="1.10.287.40">
    <property type="entry name" value="Serine-tRNA synthetase, tRNA binding domain"/>
    <property type="match status" value="1"/>
</dbReference>
<dbReference type="HAMAP" id="MF_00176">
    <property type="entry name" value="Ser_tRNA_synth_type1"/>
    <property type="match status" value="1"/>
</dbReference>
<dbReference type="InterPro" id="IPR002314">
    <property type="entry name" value="aa-tRNA-synt_IIb"/>
</dbReference>
<dbReference type="InterPro" id="IPR006195">
    <property type="entry name" value="aa-tRNA-synth_II"/>
</dbReference>
<dbReference type="InterPro" id="IPR045864">
    <property type="entry name" value="aa-tRNA-synth_II/BPL/LPL"/>
</dbReference>
<dbReference type="InterPro" id="IPR002317">
    <property type="entry name" value="Ser-tRNA-ligase_type_1"/>
</dbReference>
<dbReference type="InterPro" id="IPR015866">
    <property type="entry name" value="Ser-tRNA-synth_1_N"/>
</dbReference>
<dbReference type="InterPro" id="IPR042103">
    <property type="entry name" value="SerRS_1_N_sf"/>
</dbReference>
<dbReference type="InterPro" id="IPR033729">
    <property type="entry name" value="SerRS_core"/>
</dbReference>
<dbReference type="InterPro" id="IPR010978">
    <property type="entry name" value="tRNA-bd_arm"/>
</dbReference>
<dbReference type="NCBIfam" id="TIGR00414">
    <property type="entry name" value="serS"/>
    <property type="match status" value="1"/>
</dbReference>
<dbReference type="PANTHER" id="PTHR43697:SF1">
    <property type="entry name" value="SERINE--TRNA LIGASE"/>
    <property type="match status" value="1"/>
</dbReference>
<dbReference type="PANTHER" id="PTHR43697">
    <property type="entry name" value="SERYL-TRNA SYNTHETASE"/>
    <property type="match status" value="1"/>
</dbReference>
<dbReference type="Pfam" id="PF02403">
    <property type="entry name" value="Seryl_tRNA_N"/>
    <property type="match status" value="1"/>
</dbReference>
<dbReference type="Pfam" id="PF00587">
    <property type="entry name" value="tRNA-synt_2b"/>
    <property type="match status" value="1"/>
</dbReference>
<dbReference type="PIRSF" id="PIRSF001529">
    <property type="entry name" value="Ser-tRNA-synth_IIa"/>
    <property type="match status" value="1"/>
</dbReference>
<dbReference type="PRINTS" id="PR00981">
    <property type="entry name" value="TRNASYNTHSER"/>
</dbReference>
<dbReference type="SUPFAM" id="SSF55681">
    <property type="entry name" value="Class II aaRS and biotin synthetases"/>
    <property type="match status" value="1"/>
</dbReference>
<dbReference type="SUPFAM" id="SSF46589">
    <property type="entry name" value="tRNA-binding arm"/>
    <property type="match status" value="1"/>
</dbReference>
<dbReference type="PROSITE" id="PS50862">
    <property type="entry name" value="AA_TRNA_LIGASE_II"/>
    <property type="match status" value="1"/>
</dbReference>
<keyword id="KW-0030">Aminoacyl-tRNA synthetase</keyword>
<keyword id="KW-0067">ATP-binding</keyword>
<keyword id="KW-0963">Cytoplasm</keyword>
<keyword id="KW-0436">Ligase</keyword>
<keyword id="KW-0547">Nucleotide-binding</keyword>
<keyword id="KW-0648">Protein biosynthesis</keyword>
<keyword id="KW-1185">Reference proteome</keyword>
<reference key="1">
    <citation type="journal article" date="2008" name="PLoS ONE">
        <title>Genome sequence of the saprophyte Leptospira biflexa provides insights into the evolution of Leptospira and the pathogenesis of leptospirosis.</title>
        <authorList>
            <person name="Picardeau M."/>
            <person name="Bulach D.M."/>
            <person name="Bouchier C."/>
            <person name="Zuerner R.L."/>
            <person name="Zidane N."/>
            <person name="Wilson P.J."/>
            <person name="Creno S."/>
            <person name="Kuczek E.S."/>
            <person name="Bommezzadri S."/>
            <person name="Davis J.C."/>
            <person name="McGrath A."/>
            <person name="Johnson M.J."/>
            <person name="Boursaux-Eude C."/>
            <person name="Seemann T."/>
            <person name="Rouy Z."/>
            <person name="Coppel R.L."/>
            <person name="Rood J.I."/>
            <person name="Lajus A."/>
            <person name="Davies J.K."/>
            <person name="Medigue C."/>
            <person name="Adler B."/>
        </authorList>
    </citation>
    <scope>NUCLEOTIDE SEQUENCE [LARGE SCALE GENOMIC DNA]</scope>
    <source>
        <strain>Patoc 1 / ATCC 23582 / Paris</strain>
    </source>
</reference>
<organism>
    <name type="scientific">Leptospira biflexa serovar Patoc (strain Patoc 1 / ATCC 23582 / Paris)</name>
    <dbReference type="NCBI Taxonomy" id="456481"/>
    <lineage>
        <taxon>Bacteria</taxon>
        <taxon>Pseudomonadati</taxon>
        <taxon>Spirochaetota</taxon>
        <taxon>Spirochaetia</taxon>
        <taxon>Leptospirales</taxon>
        <taxon>Leptospiraceae</taxon>
        <taxon>Leptospira</taxon>
    </lineage>
</organism>
<gene>
    <name evidence="1" type="primary">serS</name>
    <name type="ordered locus">LEPBI_I3467</name>
</gene>
<proteinExistence type="inferred from homology"/>
<comment type="function">
    <text evidence="1">Catalyzes the attachment of serine to tRNA(Ser). Is also able to aminoacylate tRNA(Sec) with serine, to form the misacylated tRNA L-seryl-tRNA(Sec), which will be further converted into selenocysteinyl-tRNA(Sec).</text>
</comment>
<comment type="catalytic activity">
    <reaction evidence="1">
        <text>tRNA(Ser) + L-serine + ATP = L-seryl-tRNA(Ser) + AMP + diphosphate + H(+)</text>
        <dbReference type="Rhea" id="RHEA:12292"/>
        <dbReference type="Rhea" id="RHEA-COMP:9669"/>
        <dbReference type="Rhea" id="RHEA-COMP:9703"/>
        <dbReference type="ChEBI" id="CHEBI:15378"/>
        <dbReference type="ChEBI" id="CHEBI:30616"/>
        <dbReference type="ChEBI" id="CHEBI:33019"/>
        <dbReference type="ChEBI" id="CHEBI:33384"/>
        <dbReference type="ChEBI" id="CHEBI:78442"/>
        <dbReference type="ChEBI" id="CHEBI:78533"/>
        <dbReference type="ChEBI" id="CHEBI:456215"/>
        <dbReference type="EC" id="6.1.1.11"/>
    </reaction>
</comment>
<comment type="catalytic activity">
    <reaction evidence="1">
        <text>tRNA(Sec) + L-serine + ATP = L-seryl-tRNA(Sec) + AMP + diphosphate + H(+)</text>
        <dbReference type="Rhea" id="RHEA:42580"/>
        <dbReference type="Rhea" id="RHEA-COMP:9742"/>
        <dbReference type="Rhea" id="RHEA-COMP:10128"/>
        <dbReference type="ChEBI" id="CHEBI:15378"/>
        <dbReference type="ChEBI" id="CHEBI:30616"/>
        <dbReference type="ChEBI" id="CHEBI:33019"/>
        <dbReference type="ChEBI" id="CHEBI:33384"/>
        <dbReference type="ChEBI" id="CHEBI:78442"/>
        <dbReference type="ChEBI" id="CHEBI:78533"/>
        <dbReference type="ChEBI" id="CHEBI:456215"/>
        <dbReference type="EC" id="6.1.1.11"/>
    </reaction>
</comment>
<comment type="pathway">
    <text evidence="1">Aminoacyl-tRNA biosynthesis; selenocysteinyl-tRNA(Sec) biosynthesis; L-seryl-tRNA(Sec) from L-serine and tRNA(Sec): step 1/1.</text>
</comment>
<comment type="subunit">
    <text evidence="1">Homodimer. The tRNA molecule binds across the dimer.</text>
</comment>
<comment type="subcellular location">
    <subcellularLocation>
        <location evidence="1">Cytoplasm</location>
    </subcellularLocation>
</comment>
<comment type="domain">
    <text evidence="1">Consists of two distinct domains, a catalytic core and a N-terminal extension that is involved in tRNA binding.</text>
</comment>
<comment type="similarity">
    <text evidence="1">Belongs to the class-II aminoacyl-tRNA synthetase family. Type-1 seryl-tRNA synthetase subfamily.</text>
</comment>